<feature type="chain" id="PRO_0000157982" description="Protein-glutamate methylesterase/protein-glutamine glutaminase of group 2 operon">
    <location>
        <begin position="1"/>
        <end position="397"/>
    </location>
</feature>
<feature type="domain" description="Response regulatory" evidence="1">
    <location>
        <begin position="21"/>
        <end position="139"/>
    </location>
</feature>
<feature type="domain" description="CheB-type methylesterase" evidence="1">
    <location>
        <begin position="199"/>
        <end position="388"/>
    </location>
</feature>
<feature type="active site" evidence="1">
    <location>
        <position position="213"/>
    </location>
</feature>
<feature type="active site" evidence="1">
    <location>
        <position position="241"/>
    </location>
</feature>
<feature type="active site" evidence="1">
    <location>
        <position position="337"/>
    </location>
</feature>
<feature type="modified residue" description="4-aspartylphosphate" evidence="1">
    <location>
        <position position="72"/>
    </location>
</feature>
<comment type="function">
    <text evidence="1">Involved in chemotaxis. Part of a chemotaxis signal transduction system that modulates chemotaxis in response to various stimuli. Catalyzes the demethylation of specific methylglutamate residues introduced into the chemoreceptors (methyl-accepting chemotaxis proteins or MCP) by CheR. Also mediates the irreversible deamidation of specific glutamine residues to glutamic acid.</text>
</comment>
<comment type="catalytic activity">
    <reaction evidence="1">
        <text>[protein]-L-glutamate 5-O-methyl ester + H2O = L-glutamyl-[protein] + methanol + H(+)</text>
        <dbReference type="Rhea" id="RHEA:23236"/>
        <dbReference type="Rhea" id="RHEA-COMP:10208"/>
        <dbReference type="Rhea" id="RHEA-COMP:10311"/>
        <dbReference type="ChEBI" id="CHEBI:15377"/>
        <dbReference type="ChEBI" id="CHEBI:15378"/>
        <dbReference type="ChEBI" id="CHEBI:17790"/>
        <dbReference type="ChEBI" id="CHEBI:29973"/>
        <dbReference type="ChEBI" id="CHEBI:82795"/>
        <dbReference type="EC" id="3.1.1.61"/>
    </reaction>
</comment>
<comment type="catalytic activity">
    <reaction evidence="1">
        <text>L-glutaminyl-[protein] + H2O = L-glutamyl-[protein] + NH4(+)</text>
        <dbReference type="Rhea" id="RHEA:16441"/>
        <dbReference type="Rhea" id="RHEA-COMP:10207"/>
        <dbReference type="Rhea" id="RHEA-COMP:10208"/>
        <dbReference type="ChEBI" id="CHEBI:15377"/>
        <dbReference type="ChEBI" id="CHEBI:28938"/>
        <dbReference type="ChEBI" id="CHEBI:29973"/>
        <dbReference type="ChEBI" id="CHEBI:30011"/>
        <dbReference type="EC" id="3.5.1.44"/>
    </reaction>
</comment>
<comment type="subcellular location">
    <subcellularLocation>
        <location evidence="1">Cytoplasm</location>
    </subcellularLocation>
</comment>
<comment type="domain">
    <text evidence="1">Contains a C-terminal catalytic domain, and an N-terminal region which modulates catalytic activity.</text>
</comment>
<comment type="PTM">
    <text evidence="1">Phosphorylated by CheA. Phosphorylation of the N-terminal regulatory domain activates the methylesterase activity.</text>
</comment>
<comment type="miscellaneous">
    <text>B.japonicum does not have a chemotaxis group 1 operon.</text>
</comment>
<comment type="similarity">
    <text evidence="1">Belongs to the CheB family.</text>
</comment>
<organism>
    <name type="scientific">Bradyrhizobium diazoefficiens (strain JCM 10833 / BCRC 13528 / IAM 13628 / NBRC 14792 / USDA 110)</name>
    <dbReference type="NCBI Taxonomy" id="224911"/>
    <lineage>
        <taxon>Bacteria</taxon>
        <taxon>Pseudomonadati</taxon>
        <taxon>Pseudomonadota</taxon>
        <taxon>Alphaproteobacteria</taxon>
        <taxon>Hyphomicrobiales</taxon>
        <taxon>Nitrobacteraceae</taxon>
        <taxon>Bradyrhizobium</taxon>
    </lineage>
</organism>
<name>CHEB2_BRADU</name>
<accession>Q89T55</accession>
<gene>
    <name evidence="1" type="primary">cheB2</name>
    <name type="ordered locus">blr2195</name>
</gene>
<evidence type="ECO:0000255" key="1">
    <source>
        <dbReference type="HAMAP-Rule" id="MF_00099"/>
    </source>
</evidence>
<protein>
    <recommendedName>
        <fullName>Protein-glutamate methylesterase/protein-glutamine glutaminase of group 2 operon</fullName>
        <ecNumber evidence="1">3.1.1.61</ecNumber>
        <ecNumber evidence="1">3.5.1.44</ecNumber>
    </recommendedName>
</protein>
<keyword id="KW-0145">Chemotaxis</keyword>
<keyword id="KW-0963">Cytoplasm</keyword>
<keyword id="KW-0378">Hydrolase</keyword>
<keyword id="KW-0597">Phosphoprotein</keyword>
<keyword id="KW-1185">Reference proteome</keyword>
<reference key="1">
    <citation type="journal article" date="2002" name="DNA Res.">
        <title>Complete genomic sequence of nitrogen-fixing symbiotic bacterium Bradyrhizobium japonicum USDA110.</title>
        <authorList>
            <person name="Kaneko T."/>
            <person name="Nakamura Y."/>
            <person name="Sato S."/>
            <person name="Minamisawa K."/>
            <person name="Uchiumi T."/>
            <person name="Sasamoto S."/>
            <person name="Watanabe A."/>
            <person name="Idesawa K."/>
            <person name="Iriguchi M."/>
            <person name="Kawashima K."/>
            <person name="Kohara M."/>
            <person name="Matsumoto M."/>
            <person name="Shimpo S."/>
            <person name="Tsuruoka H."/>
            <person name="Wada T."/>
            <person name="Yamada M."/>
            <person name="Tabata S."/>
        </authorList>
    </citation>
    <scope>NUCLEOTIDE SEQUENCE [LARGE SCALE GENOMIC DNA]</scope>
    <source>
        <strain>JCM 10833 / BCRC 13528 / IAM 13628 / NBRC 14792 / USDA 110</strain>
    </source>
</reference>
<proteinExistence type="inferred from homology"/>
<dbReference type="EC" id="3.1.1.61" evidence="1"/>
<dbReference type="EC" id="3.5.1.44" evidence="1"/>
<dbReference type="EMBL" id="BA000040">
    <property type="protein sequence ID" value="BAC47460.1"/>
    <property type="molecule type" value="Genomic_DNA"/>
</dbReference>
<dbReference type="RefSeq" id="NP_768835.1">
    <property type="nucleotide sequence ID" value="NC_004463.1"/>
</dbReference>
<dbReference type="RefSeq" id="WP_011084984.1">
    <property type="nucleotide sequence ID" value="NC_004463.1"/>
</dbReference>
<dbReference type="SMR" id="Q89T55"/>
<dbReference type="STRING" id="224911.AAV28_07840"/>
<dbReference type="EnsemblBacteria" id="BAC47460">
    <property type="protein sequence ID" value="BAC47460"/>
    <property type="gene ID" value="BAC47460"/>
</dbReference>
<dbReference type="GeneID" id="46489240"/>
<dbReference type="KEGG" id="bja:blr2195"/>
<dbReference type="PATRIC" id="fig|224911.44.peg.1723"/>
<dbReference type="eggNOG" id="COG2201">
    <property type="taxonomic scope" value="Bacteria"/>
</dbReference>
<dbReference type="HOGENOM" id="CLU_000445_51_0_5"/>
<dbReference type="InParanoid" id="Q89T55"/>
<dbReference type="OrthoDB" id="9793421at2"/>
<dbReference type="PhylomeDB" id="Q89T55"/>
<dbReference type="Proteomes" id="UP000002526">
    <property type="component" value="Chromosome"/>
</dbReference>
<dbReference type="GO" id="GO:0005737">
    <property type="term" value="C:cytoplasm"/>
    <property type="evidence" value="ECO:0007669"/>
    <property type="project" value="UniProtKB-SubCell"/>
</dbReference>
<dbReference type="GO" id="GO:0000156">
    <property type="term" value="F:phosphorelay response regulator activity"/>
    <property type="evidence" value="ECO:0007669"/>
    <property type="project" value="InterPro"/>
</dbReference>
<dbReference type="GO" id="GO:0008984">
    <property type="term" value="F:protein-glutamate methylesterase activity"/>
    <property type="evidence" value="ECO:0007669"/>
    <property type="project" value="UniProtKB-UniRule"/>
</dbReference>
<dbReference type="GO" id="GO:0050568">
    <property type="term" value="F:protein-glutamine glutaminase activity"/>
    <property type="evidence" value="ECO:0007669"/>
    <property type="project" value="UniProtKB-UniRule"/>
</dbReference>
<dbReference type="GO" id="GO:0006935">
    <property type="term" value="P:chemotaxis"/>
    <property type="evidence" value="ECO:0007669"/>
    <property type="project" value="UniProtKB-UniRule"/>
</dbReference>
<dbReference type="CDD" id="cd16432">
    <property type="entry name" value="CheB_Rec"/>
    <property type="match status" value="1"/>
</dbReference>
<dbReference type="CDD" id="cd17541">
    <property type="entry name" value="REC_CheB-like"/>
    <property type="match status" value="1"/>
</dbReference>
<dbReference type="Gene3D" id="3.40.50.2300">
    <property type="match status" value="1"/>
</dbReference>
<dbReference type="Gene3D" id="3.40.50.180">
    <property type="entry name" value="Methylesterase CheB, C-terminal domain"/>
    <property type="match status" value="1"/>
</dbReference>
<dbReference type="HAMAP" id="MF_00099">
    <property type="entry name" value="CheB_chemtxs"/>
    <property type="match status" value="1"/>
</dbReference>
<dbReference type="InterPro" id="IPR008248">
    <property type="entry name" value="CheB-like"/>
</dbReference>
<dbReference type="InterPro" id="IPR035909">
    <property type="entry name" value="CheB_C"/>
</dbReference>
<dbReference type="InterPro" id="IPR011006">
    <property type="entry name" value="CheY-like_superfamily"/>
</dbReference>
<dbReference type="InterPro" id="IPR000673">
    <property type="entry name" value="Sig_transdc_resp-reg_Me-estase"/>
</dbReference>
<dbReference type="InterPro" id="IPR001789">
    <property type="entry name" value="Sig_transdc_resp-reg_receiver"/>
</dbReference>
<dbReference type="NCBIfam" id="NF001965">
    <property type="entry name" value="PRK00742.1"/>
    <property type="match status" value="1"/>
</dbReference>
<dbReference type="PANTHER" id="PTHR42872">
    <property type="entry name" value="PROTEIN-GLUTAMATE METHYLESTERASE/PROTEIN-GLUTAMINE GLUTAMINASE"/>
    <property type="match status" value="1"/>
</dbReference>
<dbReference type="PANTHER" id="PTHR42872:SF3">
    <property type="entry name" value="PROTEIN-GLUTAMATE METHYLESTERASE_PROTEIN-GLUTAMINE GLUTAMINASE 1"/>
    <property type="match status" value="1"/>
</dbReference>
<dbReference type="Pfam" id="PF01339">
    <property type="entry name" value="CheB_methylest"/>
    <property type="match status" value="1"/>
</dbReference>
<dbReference type="Pfam" id="PF00072">
    <property type="entry name" value="Response_reg"/>
    <property type="match status" value="1"/>
</dbReference>
<dbReference type="PIRSF" id="PIRSF000876">
    <property type="entry name" value="RR_chemtxs_CheB"/>
    <property type="match status" value="1"/>
</dbReference>
<dbReference type="SMART" id="SM00448">
    <property type="entry name" value="REC"/>
    <property type="match status" value="1"/>
</dbReference>
<dbReference type="SUPFAM" id="SSF52172">
    <property type="entry name" value="CheY-like"/>
    <property type="match status" value="1"/>
</dbReference>
<dbReference type="SUPFAM" id="SSF52738">
    <property type="entry name" value="Methylesterase CheB, C-terminal domain"/>
    <property type="match status" value="1"/>
</dbReference>
<dbReference type="PROSITE" id="PS50122">
    <property type="entry name" value="CHEB"/>
    <property type="match status" value="1"/>
</dbReference>
<dbReference type="PROSITE" id="PS50110">
    <property type="entry name" value="RESPONSE_REGULATORY"/>
    <property type="match status" value="1"/>
</dbReference>
<sequence length="397" mass="41279">MSVAFAGNSTSGSSREAGPLRVMIVDDSVVIRGLISRWVGAEHDMEVAASLRTGLEAVNQLERINPDVAVLDIEMPELDGISALPQLLAKKRDLVIIMASTLTRRNAEISFKALSLGAADYIPKPESTREASAADTFHHDLIQKIRHLGARLRRKAAVASPPLAPASPPPAARAPFVARPAAPAPAANALLPGALSTRPFSTLAPKVLLIGSSTGGPQALMALVTELGPVIDRFPVLITQHMPPTFTTILAEHLARSSRRPAAEAVDGEPVKPGRIYLAPGGKHMRVVRSGADVAIALDDGPAVNFCKPAVDPLFTSAIDIWHGAILSVILTGMGSDGMRGGKDIVAAGGSVIAQDEASSVVWGMPGAAANAGICAAILPLNQIGAKVNRLFAGDRS</sequence>